<accession>Q02779</accession>
<accession>Q12761</accession>
<accession>Q14871</accession>
<dbReference type="EC" id="2.7.11.25"/>
<dbReference type="EMBL" id="X90846">
    <property type="protein sequence ID" value="CAA62351.1"/>
    <property type="molecule type" value="mRNA"/>
</dbReference>
<dbReference type="EMBL" id="Z48615">
    <property type="protein sequence ID" value="CAA88531.1"/>
    <property type="molecule type" value="mRNA"/>
</dbReference>
<dbReference type="CCDS" id="CCDS12549.1"/>
<dbReference type="PIR" id="S68178">
    <property type="entry name" value="S68178"/>
</dbReference>
<dbReference type="RefSeq" id="NP_002437.2">
    <property type="nucleotide sequence ID" value="NM_002446.3"/>
</dbReference>
<dbReference type="PDB" id="2RF0">
    <property type="method" value="X-ray"/>
    <property type="resolution" value="2.00 A"/>
    <property type="chains" value="A/B/C/D=13-78"/>
</dbReference>
<dbReference type="PDBsum" id="2RF0"/>
<dbReference type="SMR" id="Q02779"/>
<dbReference type="BioGRID" id="110440">
    <property type="interactions" value="56"/>
</dbReference>
<dbReference type="ELM" id="Q02779"/>
<dbReference type="FunCoup" id="Q02779">
    <property type="interactions" value="963"/>
</dbReference>
<dbReference type="IntAct" id="Q02779">
    <property type="interactions" value="23"/>
</dbReference>
<dbReference type="STRING" id="9606.ENSP00000253055"/>
<dbReference type="BindingDB" id="Q02779"/>
<dbReference type="ChEMBL" id="CHEMBL2873"/>
<dbReference type="DrugBank" id="DB12010">
    <property type="generic name" value="Fostamatinib"/>
</dbReference>
<dbReference type="DrugCentral" id="Q02779"/>
<dbReference type="GuidetoPHARMACOLOGY" id="2070"/>
<dbReference type="GlyGen" id="Q02779">
    <property type="glycosylation" value="5 sites, 1 O-linked glycan (1 site)"/>
</dbReference>
<dbReference type="iPTMnet" id="Q02779"/>
<dbReference type="PhosphoSitePlus" id="Q02779"/>
<dbReference type="BioMuta" id="MAP3K10"/>
<dbReference type="DMDM" id="145559494"/>
<dbReference type="CPTAC" id="non-CPTAC-6032"/>
<dbReference type="CPTAC" id="non-CPTAC-6033"/>
<dbReference type="jPOST" id="Q02779"/>
<dbReference type="MassIVE" id="Q02779"/>
<dbReference type="PaxDb" id="9606-ENSP00000253055"/>
<dbReference type="PeptideAtlas" id="Q02779"/>
<dbReference type="ProteomicsDB" id="58124"/>
<dbReference type="TopDownProteomics" id="Q02779"/>
<dbReference type="Antibodypedia" id="2053">
    <property type="antibodies" value="268 antibodies from 34 providers"/>
</dbReference>
<dbReference type="DNASU" id="4294"/>
<dbReference type="Ensembl" id="ENST00000253055.8">
    <property type="protein sequence ID" value="ENSP00000253055.2"/>
    <property type="gene ID" value="ENSG00000130758.8"/>
</dbReference>
<dbReference type="GeneID" id="4294"/>
<dbReference type="KEGG" id="hsa:4294"/>
<dbReference type="MANE-Select" id="ENST00000253055.8">
    <property type="protein sequence ID" value="ENSP00000253055.2"/>
    <property type="RefSeq nucleotide sequence ID" value="NM_002446.4"/>
    <property type="RefSeq protein sequence ID" value="NP_002437.2"/>
</dbReference>
<dbReference type="UCSC" id="uc002ona.3">
    <property type="organism name" value="human"/>
</dbReference>
<dbReference type="AGR" id="HGNC:6849"/>
<dbReference type="CTD" id="4294"/>
<dbReference type="DisGeNET" id="4294"/>
<dbReference type="GeneCards" id="MAP3K10"/>
<dbReference type="HGNC" id="HGNC:6849">
    <property type="gene designation" value="MAP3K10"/>
</dbReference>
<dbReference type="HPA" id="ENSG00000130758">
    <property type="expression patterns" value="Tissue enriched (brain)"/>
</dbReference>
<dbReference type="MIM" id="600137">
    <property type="type" value="gene"/>
</dbReference>
<dbReference type="neXtProt" id="NX_Q02779"/>
<dbReference type="OpenTargets" id="ENSG00000130758"/>
<dbReference type="PharmGKB" id="PA30593"/>
<dbReference type="VEuPathDB" id="HostDB:ENSG00000130758"/>
<dbReference type="eggNOG" id="KOG0192">
    <property type="taxonomic scope" value="Eukaryota"/>
</dbReference>
<dbReference type="GeneTree" id="ENSGT00940000160518"/>
<dbReference type="HOGENOM" id="CLU_000288_7_14_1"/>
<dbReference type="InParanoid" id="Q02779"/>
<dbReference type="OMA" id="CNQRKKS"/>
<dbReference type="OrthoDB" id="339325at2759"/>
<dbReference type="PAN-GO" id="Q02779">
    <property type="GO annotations" value="2 GO annotations based on evolutionary models"/>
</dbReference>
<dbReference type="PhylomeDB" id="Q02779"/>
<dbReference type="TreeFam" id="TF105118"/>
<dbReference type="PathwayCommons" id="Q02779"/>
<dbReference type="SABIO-RK" id="Q02779"/>
<dbReference type="SignaLink" id="Q02779"/>
<dbReference type="SIGNOR" id="Q02779"/>
<dbReference type="BioGRID-ORCS" id="4294">
    <property type="hits" value="11 hits in 1193 CRISPR screens"/>
</dbReference>
<dbReference type="ChiTaRS" id="MAP3K10">
    <property type="organism name" value="human"/>
</dbReference>
<dbReference type="EvolutionaryTrace" id="Q02779"/>
<dbReference type="GeneWiki" id="MAP3K10"/>
<dbReference type="GenomeRNAi" id="4294"/>
<dbReference type="Pharos" id="Q02779">
    <property type="development level" value="Tchem"/>
</dbReference>
<dbReference type="PRO" id="PR:Q02779"/>
<dbReference type="Proteomes" id="UP000005640">
    <property type="component" value="Chromosome 19"/>
</dbReference>
<dbReference type="RNAct" id="Q02779">
    <property type="molecule type" value="protein"/>
</dbReference>
<dbReference type="Bgee" id="ENSG00000130758">
    <property type="expression patterns" value="Expressed in right frontal lobe and 127 other cell types or tissues"/>
</dbReference>
<dbReference type="ExpressionAtlas" id="Q02779">
    <property type="expression patterns" value="baseline and differential"/>
</dbReference>
<dbReference type="GO" id="GO:0005737">
    <property type="term" value="C:cytoplasm"/>
    <property type="evidence" value="ECO:0000314"/>
    <property type="project" value="UniProtKB"/>
</dbReference>
<dbReference type="GO" id="GO:0005524">
    <property type="term" value="F:ATP binding"/>
    <property type="evidence" value="ECO:0007669"/>
    <property type="project" value="UniProtKB-KW"/>
</dbReference>
<dbReference type="GO" id="GO:0043425">
    <property type="term" value="F:bHLH transcription factor binding"/>
    <property type="evidence" value="ECO:0000353"/>
    <property type="project" value="UniProtKB"/>
</dbReference>
<dbReference type="GO" id="GO:0004706">
    <property type="term" value="F:JUN kinase kinase kinase activity"/>
    <property type="evidence" value="ECO:0000250"/>
    <property type="project" value="UniProtKB"/>
</dbReference>
<dbReference type="GO" id="GO:0042803">
    <property type="term" value="F:protein homodimerization activity"/>
    <property type="evidence" value="ECO:0000250"/>
    <property type="project" value="UniProtKB"/>
</dbReference>
<dbReference type="GO" id="GO:0004672">
    <property type="term" value="F:protein kinase activity"/>
    <property type="evidence" value="ECO:0000304"/>
    <property type="project" value="ProtInc"/>
</dbReference>
<dbReference type="GO" id="GO:0106310">
    <property type="term" value="F:protein serine kinase activity"/>
    <property type="evidence" value="ECO:0007669"/>
    <property type="project" value="RHEA"/>
</dbReference>
<dbReference type="GO" id="GO:0004674">
    <property type="term" value="F:protein serine/threonine kinase activity"/>
    <property type="evidence" value="ECO:0000314"/>
    <property type="project" value="UniProtKB"/>
</dbReference>
<dbReference type="GO" id="GO:0003714">
    <property type="term" value="F:transcription corepressor activity"/>
    <property type="evidence" value="ECO:0000250"/>
    <property type="project" value="UniProtKB"/>
</dbReference>
<dbReference type="GO" id="GO:0006915">
    <property type="term" value="P:apoptotic process"/>
    <property type="evidence" value="ECO:0000304"/>
    <property type="project" value="ProtInc"/>
</dbReference>
<dbReference type="GO" id="GO:0007254">
    <property type="term" value="P:JNK cascade"/>
    <property type="evidence" value="ECO:0000304"/>
    <property type="project" value="ProtInc"/>
</dbReference>
<dbReference type="GO" id="GO:0043433">
    <property type="term" value="P:negative regulation of DNA-binding transcription factor activity"/>
    <property type="evidence" value="ECO:0000315"/>
    <property type="project" value="UniProtKB"/>
</dbReference>
<dbReference type="GO" id="GO:0045892">
    <property type="term" value="P:negative regulation of DNA-templated transcription"/>
    <property type="evidence" value="ECO:0000315"/>
    <property type="project" value="UniProtKB"/>
</dbReference>
<dbReference type="GO" id="GO:0018105">
    <property type="term" value="P:peptidyl-serine phosphorylation"/>
    <property type="evidence" value="ECO:0000314"/>
    <property type="project" value="UniProtKB"/>
</dbReference>
<dbReference type="GO" id="GO:0018107">
    <property type="term" value="P:peptidyl-threonine phosphorylation"/>
    <property type="evidence" value="ECO:0000314"/>
    <property type="project" value="UniProtKB"/>
</dbReference>
<dbReference type="GO" id="GO:0043065">
    <property type="term" value="P:positive regulation of apoptotic process"/>
    <property type="evidence" value="ECO:0000318"/>
    <property type="project" value="GO_Central"/>
</dbReference>
<dbReference type="GO" id="GO:0046330">
    <property type="term" value="P:positive regulation of JNK cascade"/>
    <property type="evidence" value="ECO:0000315"/>
    <property type="project" value="UniProtKB"/>
</dbReference>
<dbReference type="GO" id="GO:0043507">
    <property type="term" value="P:positive regulation of JUN kinase activity"/>
    <property type="evidence" value="ECO:0000315"/>
    <property type="project" value="UniProtKB"/>
</dbReference>
<dbReference type="GO" id="GO:0046777">
    <property type="term" value="P:protein autophosphorylation"/>
    <property type="evidence" value="ECO:0000250"/>
    <property type="project" value="UniProtKB"/>
</dbReference>
<dbReference type="GO" id="GO:0007165">
    <property type="term" value="P:signal transduction"/>
    <property type="evidence" value="ECO:0000318"/>
    <property type="project" value="GO_Central"/>
</dbReference>
<dbReference type="GO" id="GO:0007224">
    <property type="term" value="P:smoothened signaling pathway"/>
    <property type="evidence" value="ECO:0000315"/>
    <property type="project" value="UniProtKB"/>
</dbReference>
<dbReference type="CDD" id="cd12059">
    <property type="entry name" value="SH3_MLK1-3"/>
    <property type="match status" value="1"/>
</dbReference>
<dbReference type="CDD" id="cd14148">
    <property type="entry name" value="STKc_MLK2"/>
    <property type="match status" value="1"/>
</dbReference>
<dbReference type="FunFam" id="1.10.510.10:FF:000076">
    <property type="entry name" value="Mitogen-activated protein kinase kinase kinase"/>
    <property type="match status" value="1"/>
</dbReference>
<dbReference type="FunFam" id="2.30.30.40:FF:000079">
    <property type="entry name" value="Mitogen-activated protein kinase kinase kinase"/>
    <property type="match status" value="1"/>
</dbReference>
<dbReference type="FunFam" id="3.30.200.20:FF:000085">
    <property type="entry name" value="Mitogen-activated protein kinase kinase kinase"/>
    <property type="match status" value="1"/>
</dbReference>
<dbReference type="Gene3D" id="3.30.200.20">
    <property type="entry name" value="Phosphorylase Kinase, domain 1"/>
    <property type="match status" value="1"/>
</dbReference>
<dbReference type="Gene3D" id="2.30.30.40">
    <property type="entry name" value="SH3 Domains"/>
    <property type="match status" value="1"/>
</dbReference>
<dbReference type="Gene3D" id="1.10.510.10">
    <property type="entry name" value="Transferase(Phosphotransferase) domain 1"/>
    <property type="match status" value="1"/>
</dbReference>
<dbReference type="InterPro" id="IPR011009">
    <property type="entry name" value="Kinase-like_dom_sf"/>
</dbReference>
<dbReference type="InterPro" id="IPR035779">
    <property type="entry name" value="MLK1-3_SH3"/>
</dbReference>
<dbReference type="InterPro" id="IPR016231">
    <property type="entry name" value="MLK1-4"/>
</dbReference>
<dbReference type="InterPro" id="IPR000719">
    <property type="entry name" value="Prot_kinase_dom"/>
</dbReference>
<dbReference type="InterPro" id="IPR017441">
    <property type="entry name" value="Protein_kinase_ATP_BS"/>
</dbReference>
<dbReference type="InterPro" id="IPR001245">
    <property type="entry name" value="Ser-Thr/Tyr_kinase_cat_dom"/>
</dbReference>
<dbReference type="InterPro" id="IPR008271">
    <property type="entry name" value="Ser/Thr_kinase_AS"/>
</dbReference>
<dbReference type="InterPro" id="IPR051681">
    <property type="entry name" value="Ser/Thr_Kinases-Pseudokinases"/>
</dbReference>
<dbReference type="InterPro" id="IPR036028">
    <property type="entry name" value="SH3-like_dom_sf"/>
</dbReference>
<dbReference type="InterPro" id="IPR001452">
    <property type="entry name" value="SH3_domain"/>
</dbReference>
<dbReference type="PANTHER" id="PTHR44329:SF39">
    <property type="entry name" value="MITOGEN-ACTIVATED PROTEIN KINASE KINASE KINASE 10"/>
    <property type="match status" value="1"/>
</dbReference>
<dbReference type="PANTHER" id="PTHR44329">
    <property type="entry name" value="SERINE/THREONINE-PROTEIN KINASE TNNI3K-RELATED"/>
    <property type="match status" value="1"/>
</dbReference>
<dbReference type="Pfam" id="PF07714">
    <property type="entry name" value="PK_Tyr_Ser-Thr"/>
    <property type="match status" value="1"/>
</dbReference>
<dbReference type="Pfam" id="PF14604">
    <property type="entry name" value="SH3_9"/>
    <property type="match status" value="1"/>
</dbReference>
<dbReference type="PIRSF" id="PIRSF000556">
    <property type="entry name" value="MAPKKK9_11"/>
    <property type="match status" value="1"/>
</dbReference>
<dbReference type="PRINTS" id="PR00452">
    <property type="entry name" value="SH3DOMAIN"/>
</dbReference>
<dbReference type="PRINTS" id="PR00109">
    <property type="entry name" value="TYRKINASE"/>
</dbReference>
<dbReference type="SMART" id="SM00220">
    <property type="entry name" value="S_TKc"/>
    <property type="match status" value="1"/>
</dbReference>
<dbReference type="SMART" id="SM00326">
    <property type="entry name" value="SH3"/>
    <property type="match status" value="1"/>
</dbReference>
<dbReference type="SUPFAM" id="SSF56112">
    <property type="entry name" value="Protein kinase-like (PK-like)"/>
    <property type="match status" value="1"/>
</dbReference>
<dbReference type="SUPFAM" id="SSF50044">
    <property type="entry name" value="SH3-domain"/>
    <property type="match status" value="1"/>
</dbReference>
<dbReference type="PROSITE" id="PS00107">
    <property type="entry name" value="PROTEIN_KINASE_ATP"/>
    <property type="match status" value="1"/>
</dbReference>
<dbReference type="PROSITE" id="PS50011">
    <property type="entry name" value="PROTEIN_KINASE_DOM"/>
    <property type="match status" value="1"/>
</dbReference>
<dbReference type="PROSITE" id="PS00108">
    <property type="entry name" value="PROTEIN_KINASE_ST"/>
    <property type="match status" value="1"/>
</dbReference>
<dbReference type="PROSITE" id="PS50002">
    <property type="entry name" value="SH3"/>
    <property type="match status" value="1"/>
</dbReference>
<reference key="1">
    <citation type="journal article" date="1995" name="Eur. J. Biochem.">
        <title>Complete nucleotide sequence, expression, and chromosomal localisation of human mixed-lineage kinase 2.</title>
        <authorList>
            <person name="Dorow D.S."/>
            <person name="Devereux L."/>
            <person name="Tu G.F."/>
            <person name="Price G."/>
            <person name="Nicholl J.K."/>
            <person name="Sutherland G.R."/>
            <person name="Simpson R.J."/>
        </authorList>
    </citation>
    <scope>NUCLEOTIDE SEQUENCE [MRNA]</scope>
    <source>
        <tissue>Brain</tissue>
    </source>
</reference>
<reference key="2">
    <citation type="journal article" date="1995" name="Oncogene">
        <title>Cloning and characterization of MST, a novel (putative) serine/threonine kinase with SH3 domain.</title>
        <authorList>
            <person name="Katoh M."/>
            <person name="Hirai M."/>
            <person name="Sugimura T."/>
            <person name="Terada M."/>
        </authorList>
    </citation>
    <scope>NUCLEOTIDE SEQUENCE [MRNA]</scope>
    <source>
        <tissue>Brain</tissue>
    </source>
</reference>
<reference key="3">
    <citation type="journal article" date="1993" name="Eur. J. Biochem.">
        <title>Identification of a new family of human epithelial protein kinases containing two leucine/isoleucine-zipper domains.</title>
        <authorList>
            <person name="Dorow D.S."/>
            <person name="Devereux L."/>
            <person name="Dietzsch E."/>
            <person name="de Kretser T."/>
        </authorList>
    </citation>
    <scope>NUCLEOTIDE SEQUENCE [MRNA] OF 244-480</scope>
    <source>
        <tissue>Colon epithelium</tissue>
    </source>
</reference>
<reference key="4">
    <citation type="journal article" date="2009" name="Mol. Cell. Proteomics">
        <title>Large-scale proteomics analysis of the human kinome.</title>
        <authorList>
            <person name="Oppermann F.S."/>
            <person name="Gnad F."/>
            <person name="Olsen J.V."/>
            <person name="Hornberger R."/>
            <person name="Greff Z."/>
            <person name="Keri G."/>
            <person name="Mann M."/>
            <person name="Daub H."/>
        </authorList>
    </citation>
    <scope>PHOSPHORYLATION [LARGE SCALE ANALYSIS] AT SER-498; SER-502 AND THR-558</scope>
    <scope>IDENTIFICATION BY MASS SPECTROMETRY [LARGE SCALE ANALYSIS]</scope>
</reference>
<reference key="5">
    <citation type="journal article" date="2009" name="Sci. Signal.">
        <title>Quantitative phosphoproteomic analysis of T cell receptor signaling reveals system-wide modulation of protein-protein interactions.</title>
        <authorList>
            <person name="Mayya V."/>
            <person name="Lundgren D.H."/>
            <person name="Hwang S.-I."/>
            <person name="Rezaul K."/>
            <person name="Wu L."/>
            <person name="Eng J.K."/>
            <person name="Rodionov V."/>
            <person name="Han D.K."/>
        </authorList>
    </citation>
    <scope>PHOSPHORYLATION [LARGE SCALE ANALYSIS] AT SER-506</scope>
    <scope>IDENTIFICATION BY MASS SPECTROMETRY [LARGE SCALE ANALYSIS]</scope>
    <source>
        <tissue>Leukemic T-cell</tissue>
    </source>
</reference>
<reference key="6">
    <citation type="journal article" date="2007" name="Nature">
        <title>Patterns of somatic mutation in human cancer genomes.</title>
        <authorList>
            <person name="Greenman C."/>
            <person name="Stephens P."/>
            <person name="Smith R."/>
            <person name="Dalgliesh G.L."/>
            <person name="Hunter C."/>
            <person name="Bignell G."/>
            <person name="Davies H."/>
            <person name="Teague J."/>
            <person name="Butler A."/>
            <person name="Stevens C."/>
            <person name="Edkins S."/>
            <person name="O'Meara S."/>
            <person name="Vastrik I."/>
            <person name="Schmidt E.E."/>
            <person name="Avis T."/>
            <person name="Barthorpe S."/>
            <person name="Bhamra G."/>
            <person name="Buck G."/>
            <person name="Choudhury B."/>
            <person name="Clements J."/>
            <person name="Cole J."/>
            <person name="Dicks E."/>
            <person name="Forbes S."/>
            <person name="Gray K."/>
            <person name="Halliday K."/>
            <person name="Harrison R."/>
            <person name="Hills K."/>
            <person name="Hinton J."/>
            <person name="Jenkinson A."/>
            <person name="Jones D."/>
            <person name="Menzies A."/>
            <person name="Mironenko T."/>
            <person name="Perry J."/>
            <person name="Raine K."/>
            <person name="Richardson D."/>
            <person name="Shepherd R."/>
            <person name="Small A."/>
            <person name="Tofts C."/>
            <person name="Varian J."/>
            <person name="Webb T."/>
            <person name="West S."/>
            <person name="Widaa S."/>
            <person name="Yates A."/>
            <person name="Cahill D.P."/>
            <person name="Louis D.N."/>
            <person name="Goldstraw P."/>
            <person name="Nicholson A.G."/>
            <person name="Brasseur F."/>
            <person name="Looijenga L."/>
            <person name="Weber B.L."/>
            <person name="Chiew Y.-E."/>
            <person name="DeFazio A."/>
            <person name="Greaves M.F."/>
            <person name="Green A.R."/>
            <person name="Campbell P."/>
            <person name="Birney E."/>
            <person name="Easton D.F."/>
            <person name="Chenevix-Trench G."/>
            <person name="Tan M.-H."/>
            <person name="Khoo S.K."/>
            <person name="Teh B.T."/>
            <person name="Yuen S.T."/>
            <person name="Leung S.Y."/>
            <person name="Wooster R."/>
            <person name="Futreal P.A."/>
            <person name="Stratton M.R."/>
        </authorList>
    </citation>
    <scope>VARIANT [LARGE SCALE ANALYSIS] GLU-107</scope>
</reference>
<keyword id="KW-0002">3D-structure</keyword>
<keyword id="KW-0067">ATP-binding</keyword>
<keyword id="KW-0418">Kinase</keyword>
<keyword id="KW-0488">Methylation</keyword>
<keyword id="KW-0547">Nucleotide-binding</keyword>
<keyword id="KW-0597">Phosphoprotein</keyword>
<keyword id="KW-1267">Proteomics identification</keyword>
<keyword id="KW-1185">Reference proteome</keyword>
<keyword id="KW-0677">Repeat</keyword>
<keyword id="KW-0723">Serine/threonine-protein kinase</keyword>
<keyword id="KW-0728">SH3 domain</keyword>
<keyword id="KW-0808">Transferase</keyword>
<gene>
    <name type="primary">MAP3K10</name>
    <name type="synonym">MLK2</name>
    <name type="synonym">MST</name>
</gene>
<protein>
    <recommendedName>
        <fullName>Mitogen-activated protein kinase kinase kinase 10</fullName>
        <ecNumber>2.7.11.25</ecNumber>
    </recommendedName>
    <alternativeName>
        <fullName>Mixed lineage kinase 2</fullName>
    </alternativeName>
    <alternativeName>
        <fullName>Protein kinase MST</fullName>
    </alternativeName>
</protein>
<evidence type="ECO:0000250" key="1"/>
<evidence type="ECO:0000250" key="2">
    <source>
        <dbReference type="UniProtKB" id="D3ZG83"/>
    </source>
</evidence>
<evidence type="ECO:0000250" key="3">
    <source>
        <dbReference type="UniProtKB" id="Q66L42"/>
    </source>
</evidence>
<evidence type="ECO:0000255" key="4">
    <source>
        <dbReference type="PROSITE-ProRule" id="PRU00159"/>
    </source>
</evidence>
<evidence type="ECO:0000255" key="5">
    <source>
        <dbReference type="PROSITE-ProRule" id="PRU00192"/>
    </source>
</evidence>
<evidence type="ECO:0000255" key="6">
    <source>
        <dbReference type="PROSITE-ProRule" id="PRU10027"/>
    </source>
</evidence>
<evidence type="ECO:0000256" key="7">
    <source>
        <dbReference type="SAM" id="MobiDB-lite"/>
    </source>
</evidence>
<evidence type="ECO:0000269" key="8">
    <source>
    </source>
</evidence>
<evidence type="ECO:0000305" key="9"/>
<evidence type="ECO:0007744" key="10">
    <source>
    </source>
</evidence>
<evidence type="ECO:0007744" key="11">
    <source>
    </source>
</evidence>
<evidence type="ECO:0007829" key="12">
    <source>
        <dbReference type="PDB" id="2RF0"/>
    </source>
</evidence>
<feature type="chain" id="PRO_0000086259" description="Mitogen-activated protein kinase kinase kinase 10">
    <location>
        <begin position="1"/>
        <end position="954"/>
    </location>
</feature>
<feature type="domain" description="SH3" evidence="5">
    <location>
        <begin position="16"/>
        <end position="81"/>
    </location>
</feature>
<feature type="domain" description="Protein kinase" evidence="4">
    <location>
        <begin position="98"/>
        <end position="360"/>
    </location>
</feature>
<feature type="region of interest" description="Leucine-zipper 1">
    <location>
        <begin position="384"/>
        <end position="405"/>
    </location>
</feature>
<feature type="region of interest" description="Leucine-zipper 2">
    <location>
        <begin position="419"/>
        <end position="440"/>
    </location>
</feature>
<feature type="region of interest" description="Disordered" evidence="7">
    <location>
        <begin position="490"/>
        <end position="665"/>
    </location>
</feature>
<feature type="region of interest" description="Disordered" evidence="7">
    <location>
        <begin position="716"/>
        <end position="739"/>
    </location>
</feature>
<feature type="region of interest" description="Disordered" evidence="7">
    <location>
        <begin position="757"/>
        <end position="954"/>
    </location>
</feature>
<feature type="compositionally biased region" description="Low complexity" evidence="7">
    <location>
        <begin position="501"/>
        <end position="511"/>
    </location>
</feature>
<feature type="compositionally biased region" description="Basic and acidic residues" evidence="7">
    <location>
        <begin position="566"/>
        <end position="578"/>
    </location>
</feature>
<feature type="compositionally biased region" description="Acidic residues" evidence="7">
    <location>
        <begin position="611"/>
        <end position="620"/>
    </location>
</feature>
<feature type="compositionally biased region" description="Low complexity" evidence="7">
    <location>
        <begin position="631"/>
        <end position="640"/>
    </location>
</feature>
<feature type="compositionally biased region" description="Pro residues" evidence="7">
    <location>
        <begin position="773"/>
        <end position="790"/>
    </location>
</feature>
<feature type="compositionally biased region" description="Pro residues" evidence="7">
    <location>
        <begin position="913"/>
        <end position="927"/>
    </location>
</feature>
<feature type="active site" description="Proton acceptor" evidence="4 6">
    <location>
        <position position="222"/>
    </location>
</feature>
<feature type="binding site" evidence="4">
    <location>
        <begin position="104"/>
        <end position="112"/>
    </location>
    <ligand>
        <name>ATP</name>
        <dbReference type="ChEBI" id="CHEBI:30616"/>
    </ligand>
</feature>
<feature type="binding site" evidence="4">
    <location>
        <position position="125"/>
    </location>
    <ligand>
        <name>ATP</name>
        <dbReference type="ChEBI" id="CHEBI:30616"/>
    </ligand>
</feature>
<feature type="modified residue" description="Phosphothreonine; by autocatalysis" evidence="1">
    <location>
        <position position="258"/>
    </location>
</feature>
<feature type="modified residue" description="Phosphoserine; by autocatalysis and MAP4K1" evidence="1">
    <location>
        <position position="262"/>
    </location>
</feature>
<feature type="modified residue" description="Phosphoserine" evidence="10">
    <location>
        <position position="498"/>
    </location>
</feature>
<feature type="modified residue" description="Phosphoserine" evidence="10">
    <location>
        <position position="502"/>
    </location>
</feature>
<feature type="modified residue" description="Phosphoserine" evidence="11">
    <location>
        <position position="506"/>
    </location>
</feature>
<feature type="modified residue" description="Phosphothreonine" evidence="10">
    <location>
        <position position="558"/>
    </location>
</feature>
<feature type="modified residue" description="Omega-N-methylarginine" evidence="3">
    <location>
        <position position="857"/>
    </location>
</feature>
<feature type="sequence variant" id="VAR_040702" description="In a metastatic melanoma sample; somatic mutation." evidence="8">
    <original>G</original>
    <variation>E</variation>
    <location>
        <position position="107"/>
    </location>
</feature>
<feature type="sequence variant" id="VAR_051639" description="In dbSNP:rs36102209.">
    <original>P</original>
    <variation>Q</variation>
    <location>
        <position position="168"/>
    </location>
</feature>
<feature type="sequence conflict" description="In Ref. 2; CAA88531." evidence="9" ref="2">
    <original>SRL</original>
    <variation>AV</variation>
    <location>
        <begin position="462"/>
        <end position="464"/>
    </location>
</feature>
<feature type="sequence conflict" description="In Ref. 3." evidence="9" ref="3">
    <original>LKLREGGSHISLPSGF</original>
    <variation>AQAAGRRQPHQPALWL</variation>
    <location>
        <begin position="465"/>
        <end position="480"/>
    </location>
</feature>
<feature type="sequence conflict" description="In Ref. 2; CAA88531." evidence="9" ref="2">
    <original>G</original>
    <variation>S</variation>
    <location>
        <position position="471"/>
    </location>
</feature>
<feature type="sequence conflict" description="In Ref. 1; CAA62351." evidence="9" ref="1">
    <original>R</original>
    <variation>G</variation>
    <location>
        <position position="807"/>
    </location>
</feature>
<feature type="sequence conflict" description="In Ref. 1; CAA62351." evidence="9" ref="1">
    <original>A</original>
    <variation>V</variation>
    <location>
        <position position="818"/>
    </location>
</feature>
<feature type="strand" evidence="12">
    <location>
        <begin position="20"/>
        <end position="23"/>
    </location>
</feature>
<feature type="strand" evidence="12">
    <location>
        <begin position="42"/>
        <end position="47"/>
    </location>
</feature>
<feature type="helix" evidence="12">
    <location>
        <begin position="50"/>
        <end position="53"/>
    </location>
</feature>
<feature type="strand" evidence="12">
    <location>
        <begin position="58"/>
        <end position="62"/>
    </location>
</feature>
<feature type="strand" evidence="12">
    <location>
        <begin position="68"/>
        <end position="72"/>
    </location>
</feature>
<feature type="helix" evidence="12">
    <location>
        <begin position="73"/>
        <end position="75"/>
    </location>
</feature>
<sequence length="954" mass="103694">MEEEEGAVAKEWGTTPAGPVWTAVFDYEAAGDEELTLRRGDRVQVLSQDCAVSGDEGWWTGQLPSGRVGVFPSNYVAPGAPAAPAGLQLPQEIPFHELQLEEIIGVGGFGKVYRALWRGEEVAVKAARLDPEKDPAVTAEQVCQEARLFGALQHPNIIALRGACLNPPHLCLVMEYARGGALSRVLAGRRVPPHVLVNWAVQVARGMNYLHNDAPVPIIHRDLKSINILILEAIENHNLADTVLKITDFGLAREWHKTTKMSAAGTYAWMAPEVIRLSLFSKSSDVWSFGVLLWELLTGEVPYREIDALAVAYGVAMNKLTLPIPSTCPEPFARLLEECWDPDPHGRPDFGSILKRLEVIEQSALFQMPLESFHSLQEDWKLEIQHMFDDLRTKEKELRSREEELLRAAQEQRFQEEQLRRREQELAEREMDIVERELHLLMCQLSQEKPRVRKRKGNFKRSRLLKLREGGSHISLPSGFEHKITVQASPTLDKRKGSDGASPPASPSIIPRLRAIRLTPVDCGGSSSGSSSGGSGTWSRGGPPKKEELVGGKKKGRTWGPSSTLQKERVGGEERLKGLGEGSKQWSSSAPNLGKSPKHTPIAPGFASLNEMEEFAEAEDGGSSVPPSPYSTPSYLSVPLPAEPSPGARAPWEPTPSAPPARWGHGARRRCDLALLGCATLLGAVGLGADVAEARAADGEEQRRWLDGLFFPRAGRFPRGLSPPARPHGRREDVGPGLGLAPSATLVSLSSVSDCNSTRSLLRSDSDEAAPAAPSPPPSPPAPTPTPSPSTNPLVDLELESFKKDPRQSLTPTHVTAACAVSRGHRRTPSDGALGQRGPPEPAGHGPGPRDLLDFPRLPDPQALFPARRRPPEFPGRPTTLTFAPRPRPAASRPRLDPWKLVSFGRTLTISPPSRPDTPESPGPPSVQPTLLDMDMEGQNQDSTVPLCGAHGSH</sequence>
<organism>
    <name type="scientific">Homo sapiens</name>
    <name type="common">Human</name>
    <dbReference type="NCBI Taxonomy" id="9606"/>
    <lineage>
        <taxon>Eukaryota</taxon>
        <taxon>Metazoa</taxon>
        <taxon>Chordata</taxon>
        <taxon>Craniata</taxon>
        <taxon>Vertebrata</taxon>
        <taxon>Euteleostomi</taxon>
        <taxon>Mammalia</taxon>
        <taxon>Eutheria</taxon>
        <taxon>Euarchontoglires</taxon>
        <taxon>Primates</taxon>
        <taxon>Haplorrhini</taxon>
        <taxon>Catarrhini</taxon>
        <taxon>Hominidae</taxon>
        <taxon>Homo</taxon>
    </lineage>
</organism>
<name>M3K10_HUMAN</name>
<proteinExistence type="evidence at protein level"/>
<comment type="function">
    <text evidence="1">Activates the JUN N-terminal pathway.</text>
</comment>
<comment type="catalytic activity">
    <reaction>
        <text>L-seryl-[protein] + ATP = O-phospho-L-seryl-[protein] + ADP + H(+)</text>
        <dbReference type="Rhea" id="RHEA:17989"/>
        <dbReference type="Rhea" id="RHEA-COMP:9863"/>
        <dbReference type="Rhea" id="RHEA-COMP:11604"/>
        <dbReference type="ChEBI" id="CHEBI:15378"/>
        <dbReference type="ChEBI" id="CHEBI:29999"/>
        <dbReference type="ChEBI" id="CHEBI:30616"/>
        <dbReference type="ChEBI" id="CHEBI:83421"/>
        <dbReference type="ChEBI" id="CHEBI:456216"/>
        <dbReference type="EC" id="2.7.11.25"/>
    </reaction>
</comment>
<comment type="catalytic activity">
    <reaction>
        <text>L-threonyl-[protein] + ATP = O-phospho-L-threonyl-[protein] + ADP + H(+)</text>
        <dbReference type="Rhea" id="RHEA:46608"/>
        <dbReference type="Rhea" id="RHEA-COMP:11060"/>
        <dbReference type="Rhea" id="RHEA-COMP:11605"/>
        <dbReference type="ChEBI" id="CHEBI:15378"/>
        <dbReference type="ChEBI" id="CHEBI:30013"/>
        <dbReference type="ChEBI" id="CHEBI:30616"/>
        <dbReference type="ChEBI" id="CHEBI:61977"/>
        <dbReference type="ChEBI" id="CHEBI:456216"/>
        <dbReference type="EC" id="2.7.11.25"/>
    </reaction>
</comment>
<comment type="cofactor">
    <cofactor evidence="1">
        <name>Mg(2+)</name>
        <dbReference type="ChEBI" id="CHEBI:18420"/>
    </cofactor>
</comment>
<comment type="activity regulation">
    <text evidence="1">Homodimerization via the leucine zipper domains is required for autophosphorylation and subsequent activation.</text>
</comment>
<comment type="subunit">
    <text evidence="1 2">Homodimer. Interacts with SH3RF2.</text>
</comment>
<comment type="interaction">
    <interactant intactId="EBI-3392815">
        <id>Q02779</id>
    </interactant>
    <interactant intactId="EBI-1057380">
        <id>Q5TCX8</id>
        <label>MAP3K21</label>
    </interactant>
    <organismsDiffer>false</organismsDiffer>
    <experiments>3</experiments>
</comment>
<comment type="tissue specificity">
    <text>Expressed in brain and skeletal muscle.</text>
</comment>
<comment type="PTM">
    <text evidence="1">Autophosphorylation on serine and threonine residues within the activation loop plays a role in enzyme activation.</text>
</comment>
<comment type="similarity">
    <text evidence="9">Belongs to the protein kinase superfamily. STE Ser/Thr protein kinase family. MAP kinase kinase kinase subfamily.</text>
</comment>